<sequence>MSYVIDRRLNGKNKSTVNRQRFLRRYRDHIKKAVEEAVSRRSITDMEHGEQISIPGRDIDEPVLHHGRGGKQTVVHPGNKEFTTGEHIARPQGGGGGKGPGKAGNSGEGMDEFSFQITQEEFLEFMFEDLELPNLVKRNLTGTDTFKTVRAGISNEGNPSRINIIRTLRSAHARRIALSGSSRAKLKEATVELERMKREEPDNFGDIQELEVEIDRLKARIRRVPYLDTFDLKYNLLVKQPNPSSKAVMFCLMDVSGSMTQATKDIAKRFFILLYLFLKRNYDKIDVVFIRHHTSAREVDEEEFFYSRETGGTIVSSALKLMQEIMAERYPSSDWNIYAAQASDGDNWNDDSPICREILTKQIMPFVQYYTYVEITPREHQALWYEYERIGEDYADTFAQQQLVSAGDIYPVFRELFQRRLVS</sequence>
<organism>
    <name type="scientific">Pseudomonas savastanoi pv. phaseolicola (strain 1448A / Race 6)</name>
    <name type="common">Pseudomonas syringae pv. phaseolicola (strain 1448A / Race 6)</name>
    <dbReference type="NCBI Taxonomy" id="264730"/>
    <lineage>
        <taxon>Bacteria</taxon>
        <taxon>Pseudomonadati</taxon>
        <taxon>Pseudomonadota</taxon>
        <taxon>Gammaproteobacteria</taxon>
        <taxon>Pseudomonadales</taxon>
        <taxon>Pseudomonadaceae</taxon>
        <taxon>Pseudomonas</taxon>
    </lineage>
</organism>
<feature type="chain" id="PRO_1000066867" description="UPF0229 protein PSPPH_0628">
    <location>
        <begin position="1"/>
        <end position="423"/>
    </location>
</feature>
<feature type="region of interest" description="Disordered" evidence="2">
    <location>
        <begin position="65"/>
        <end position="110"/>
    </location>
</feature>
<feature type="compositionally biased region" description="Gly residues" evidence="2">
    <location>
        <begin position="92"/>
        <end position="107"/>
    </location>
</feature>
<proteinExistence type="inferred from homology"/>
<gene>
    <name type="ordered locus">PSPPH_0628</name>
</gene>
<evidence type="ECO:0000255" key="1">
    <source>
        <dbReference type="HAMAP-Rule" id="MF_01232"/>
    </source>
</evidence>
<evidence type="ECO:0000256" key="2">
    <source>
        <dbReference type="SAM" id="MobiDB-lite"/>
    </source>
</evidence>
<reference key="1">
    <citation type="journal article" date="2005" name="J. Bacteriol.">
        <title>Whole-genome sequence analysis of Pseudomonas syringae pv. phaseolicola 1448A reveals divergence among pathovars in genes involved in virulence and transposition.</title>
        <authorList>
            <person name="Joardar V."/>
            <person name="Lindeberg M."/>
            <person name="Jackson R.W."/>
            <person name="Selengut J."/>
            <person name="Dodson R."/>
            <person name="Brinkac L.M."/>
            <person name="Daugherty S.C."/>
            <person name="DeBoy R.T."/>
            <person name="Durkin A.S."/>
            <person name="Gwinn Giglio M."/>
            <person name="Madupu R."/>
            <person name="Nelson W.C."/>
            <person name="Rosovitz M.J."/>
            <person name="Sullivan S.A."/>
            <person name="Crabtree J."/>
            <person name="Creasy T."/>
            <person name="Davidsen T.M."/>
            <person name="Haft D.H."/>
            <person name="Zafar N."/>
            <person name="Zhou L."/>
            <person name="Halpin R."/>
            <person name="Holley T."/>
            <person name="Khouri H.M."/>
            <person name="Feldblyum T.V."/>
            <person name="White O."/>
            <person name="Fraser C.M."/>
            <person name="Chatterjee A.K."/>
            <person name="Cartinhour S."/>
            <person name="Schneider D."/>
            <person name="Mansfield J.W."/>
            <person name="Collmer A."/>
            <person name="Buell R."/>
        </authorList>
    </citation>
    <scope>NUCLEOTIDE SEQUENCE [LARGE SCALE GENOMIC DNA]</scope>
    <source>
        <strain>1448A / Race 6</strain>
    </source>
</reference>
<protein>
    <recommendedName>
        <fullName evidence="1">UPF0229 protein PSPPH_0628</fullName>
    </recommendedName>
</protein>
<comment type="similarity">
    <text evidence="1">Belongs to the UPF0229 family.</text>
</comment>
<name>Y628_PSE14</name>
<accession>Q48NU2</accession>
<dbReference type="EMBL" id="CP000058">
    <property type="protein sequence ID" value="AAZ37191.1"/>
    <property type="molecule type" value="Genomic_DNA"/>
</dbReference>
<dbReference type="RefSeq" id="WP_002551884.1">
    <property type="nucleotide sequence ID" value="NC_005773.3"/>
</dbReference>
<dbReference type="SMR" id="Q48NU2"/>
<dbReference type="KEGG" id="psp:PSPPH_0628"/>
<dbReference type="eggNOG" id="COG2718">
    <property type="taxonomic scope" value="Bacteria"/>
</dbReference>
<dbReference type="HOGENOM" id="CLU_049702_0_0_6"/>
<dbReference type="Proteomes" id="UP000000551">
    <property type="component" value="Chromosome"/>
</dbReference>
<dbReference type="HAMAP" id="MF_01232">
    <property type="entry name" value="UPF0229"/>
    <property type="match status" value="1"/>
</dbReference>
<dbReference type="InterPro" id="IPR006698">
    <property type="entry name" value="UPF0229"/>
</dbReference>
<dbReference type="InterPro" id="IPR036465">
    <property type="entry name" value="vWFA_dom_sf"/>
</dbReference>
<dbReference type="NCBIfam" id="NF003707">
    <property type="entry name" value="PRK05325.1-2"/>
    <property type="match status" value="1"/>
</dbReference>
<dbReference type="NCBIfam" id="NF003708">
    <property type="entry name" value="PRK05325.1-3"/>
    <property type="match status" value="1"/>
</dbReference>
<dbReference type="PANTHER" id="PTHR30510">
    <property type="entry name" value="UPF0229 PROTEIN YEAH"/>
    <property type="match status" value="1"/>
</dbReference>
<dbReference type="PANTHER" id="PTHR30510:SF2">
    <property type="entry name" value="UPF0229 PROTEIN YEAH"/>
    <property type="match status" value="1"/>
</dbReference>
<dbReference type="Pfam" id="PF04285">
    <property type="entry name" value="DUF444"/>
    <property type="match status" value="1"/>
</dbReference>
<dbReference type="SUPFAM" id="SSF53300">
    <property type="entry name" value="vWA-like"/>
    <property type="match status" value="1"/>
</dbReference>